<evidence type="ECO:0000305" key="1"/>
<evidence type="ECO:0000312" key="2">
    <source>
        <dbReference type="WormBase" id="B0286.3"/>
    </source>
</evidence>
<gene>
    <name evidence="2" type="primary">paic-1</name>
    <name evidence="2" type="synonym">pacs-1</name>
    <name evidence="2" type="ORF">B0286.3</name>
</gene>
<comment type="catalytic activity">
    <reaction>
        <text>5-amino-1-(5-phospho-D-ribosyl)imidazole-4-carboxylate + L-aspartate + ATP = (2S)-2-[5-amino-1-(5-phospho-beta-D-ribosyl)imidazole-4-carboxamido]succinate + ADP + phosphate + 2 H(+)</text>
        <dbReference type="Rhea" id="RHEA:22628"/>
        <dbReference type="ChEBI" id="CHEBI:15378"/>
        <dbReference type="ChEBI" id="CHEBI:29991"/>
        <dbReference type="ChEBI" id="CHEBI:30616"/>
        <dbReference type="ChEBI" id="CHEBI:43474"/>
        <dbReference type="ChEBI" id="CHEBI:58443"/>
        <dbReference type="ChEBI" id="CHEBI:77657"/>
        <dbReference type="ChEBI" id="CHEBI:456216"/>
        <dbReference type="EC" id="6.3.2.6"/>
    </reaction>
</comment>
<comment type="catalytic activity">
    <reaction>
        <text>5-amino-1-(5-phospho-D-ribosyl)imidazole-4-carboxylate + H(+) = 5-amino-1-(5-phospho-beta-D-ribosyl)imidazole + CO2</text>
        <dbReference type="Rhea" id="RHEA:10792"/>
        <dbReference type="ChEBI" id="CHEBI:15378"/>
        <dbReference type="ChEBI" id="CHEBI:16526"/>
        <dbReference type="ChEBI" id="CHEBI:77657"/>
        <dbReference type="ChEBI" id="CHEBI:137981"/>
        <dbReference type="EC" id="4.1.1.21"/>
    </reaction>
</comment>
<comment type="pathway">
    <text>Purine metabolism; IMP biosynthesis via de novo pathway; 5-amino-1-(5-phospho-D-ribosyl)imidazole-4-carboxamide from 5-amino-1-(5-phospho-D-ribosyl)imidazole-4-carboxylate: step 1/2.</text>
</comment>
<comment type="pathway">
    <text>Purine metabolism; IMP biosynthesis via de novo pathway; 5-amino-1-(5-phospho-D-ribosyl)imidazole-4-carboxylate from 5-amino-1-(5-phospho-D-ribosyl)imidazole (carboxylase route): step 1/1.</text>
</comment>
<comment type="interaction">
    <interactant intactId="EBI-311886">
        <id>Q10457</id>
    </interactant>
    <interactant intactId="EBI-311886">
        <id>Q10457</id>
        <label>paic-1</label>
    </interactant>
    <organismsDiffer>false</organismsDiffer>
    <experiments>2</experiments>
</comment>
<comment type="similarity">
    <text evidence="1">In the N-terminal section; belongs to the SAICAR synthetase family.</text>
</comment>
<comment type="similarity">
    <text evidence="1">In the C-terminal section; belongs to the AIR carboxylase family. Class II subfamily.</text>
</comment>
<feature type="chain" id="PRO_0000075034" description="Probable multifunctional protein ADE2">
    <location>
        <begin position="1"/>
        <end position="423"/>
    </location>
</feature>
<feature type="region of interest" description="SAICAR synthetase">
    <location>
        <begin position="1"/>
        <end position="263"/>
    </location>
</feature>
<feature type="region of interest" description="AIR carboxylase">
    <location>
        <begin position="264"/>
        <end position="423"/>
    </location>
</feature>
<proteinExistence type="evidence at protein level"/>
<keyword id="KW-0067">ATP-binding</keyword>
<keyword id="KW-0210">Decarboxylase</keyword>
<keyword id="KW-0436">Ligase</keyword>
<keyword id="KW-0456">Lyase</keyword>
<keyword id="KW-0511">Multifunctional enzyme</keyword>
<keyword id="KW-0547">Nucleotide-binding</keyword>
<keyword id="KW-0658">Purine biosynthesis</keyword>
<keyword id="KW-1185">Reference proteome</keyword>
<accession>Q10457</accession>
<organism>
    <name type="scientific">Caenorhabditis elegans</name>
    <dbReference type="NCBI Taxonomy" id="6239"/>
    <lineage>
        <taxon>Eukaryota</taxon>
        <taxon>Metazoa</taxon>
        <taxon>Ecdysozoa</taxon>
        <taxon>Nematoda</taxon>
        <taxon>Chromadorea</taxon>
        <taxon>Rhabditida</taxon>
        <taxon>Rhabditina</taxon>
        <taxon>Rhabditomorpha</taxon>
        <taxon>Rhabditoidea</taxon>
        <taxon>Rhabditidae</taxon>
        <taxon>Peloderinae</taxon>
        <taxon>Caenorhabditis</taxon>
    </lineage>
</organism>
<protein>
    <recommendedName>
        <fullName>Probable multifunctional protein ADE2</fullName>
    </recommendedName>
    <domain>
        <recommendedName>
            <fullName evidence="2">Phosphoribosylaminoimidazole-succinocarboxamide synthase</fullName>
            <ecNumber>6.3.2.6</ecNumber>
        </recommendedName>
        <alternativeName>
            <fullName>SAICAR synthetase</fullName>
        </alternativeName>
    </domain>
    <domain>
        <recommendedName>
            <fullName>Phosphoribosylaminoimidazole carboxylase</fullName>
            <ecNumber>4.1.1.21</ecNumber>
        </recommendedName>
        <alternativeName>
            <fullName>AIR carboxylase</fullName>
            <shortName>AIRC</shortName>
        </alternativeName>
    </domain>
</protein>
<dbReference type="EC" id="6.3.2.6"/>
<dbReference type="EC" id="4.1.1.21"/>
<dbReference type="EMBL" id="BX284602">
    <property type="protein sequence ID" value="CCD61663.1"/>
    <property type="molecule type" value="Genomic_DNA"/>
</dbReference>
<dbReference type="PIR" id="T15309">
    <property type="entry name" value="T15309"/>
</dbReference>
<dbReference type="RefSeq" id="NP_494771.1">
    <property type="nucleotide sequence ID" value="NM_062370.7"/>
</dbReference>
<dbReference type="SMR" id="Q10457"/>
<dbReference type="BioGRID" id="39128">
    <property type="interactions" value="43"/>
</dbReference>
<dbReference type="DIP" id="DIP-24510N"/>
<dbReference type="FunCoup" id="Q10457">
    <property type="interactions" value="1699"/>
</dbReference>
<dbReference type="IntAct" id="Q10457">
    <property type="interactions" value="20"/>
</dbReference>
<dbReference type="STRING" id="6239.B0286.3.1"/>
<dbReference type="PaxDb" id="6239-B0286.3"/>
<dbReference type="PeptideAtlas" id="Q10457"/>
<dbReference type="EnsemblMetazoa" id="B0286.3.1">
    <property type="protein sequence ID" value="B0286.3.1"/>
    <property type="gene ID" value="WBGene00015116"/>
</dbReference>
<dbReference type="GeneID" id="173772"/>
<dbReference type="KEGG" id="cel:CELE_B0286.3"/>
<dbReference type="UCSC" id="B0286.3">
    <property type="organism name" value="c. elegans"/>
</dbReference>
<dbReference type="AGR" id="WB:WBGene00015116"/>
<dbReference type="CTD" id="173772"/>
<dbReference type="WormBase" id="B0286.3">
    <property type="protein sequence ID" value="CE03863"/>
    <property type="gene ID" value="WBGene00015116"/>
    <property type="gene designation" value="paic-1"/>
</dbReference>
<dbReference type="eggNOG" id="KOG2835">
    <property type="taxonomic scope" value="Eukaryota"/>
</dbReference>
<dbReference type="GeneTree" id="ENSGT00390000010172"/>
<dbReference type="HOGENOM" id="CLU_061495_1_0_1"/>
<dbReference type="InParanoid" id="Q10457"/>
<dbReference type="OMA" id="WSDEQII"/>
<dbReference type="OrthoDB" id="9991235at2759"/>
<dbReference type="PhylomeDB" id="Q10457"/>
<dbReference type="Reactome" id="R-CEL-73817">
    <property type="pathway name" value="Purine ribonucleoside monophosphate biosynthesis"/>
</dbReference>
<dbReference type="SignaLink" id="Q10457"/>
<dbReference type="UniPathway" id="UPA00074">
    <property type="reaction ID" value="UER00130"/>
</dbReference>
<dbReference type="UniPathway" id="UPA00074">
    <property type="reaction ID" value="UER00131"/>
</dbReference>
<dbReference type="PRO" id="PR:Q10457"/>
<dbReference type="Proteomes" id="UP000001940">
    <property type="component" value="Chromosome II"/>
</dbReference>
<dbReference type="Bgee" id="WBGene00015116">
    <property type="expression patterns" value="Expressed in larva and 4 other cell types or tissues"/>
</dbReference>
<dbReference type="GO" id="GO:0005524">
    <property type="term" value="F:ATP binding"/>
    <property type="evidence" value="ECO:0007669"/>
    <property type="project" value="UniProtKB-KW"/>
</dbReference>
<dbReference type="GO" id="GO:0042802">
    <property type="term" value="F:identical protein binding"/>
    <property type="evidence" value="ECO:0000353"/>
    <property type="project" value="IntAct"/>
</dbReference>
<dbReference type="GO" id="GO:0004638">
    <property type="term" value="F:phosphoribosylaminoimidazole carboxylase activity"/>
    <property type="evidence" value="ECO:0007669"/>
    <property type="project" value="UniProtKB-EC"/>
</dbReference>
<dbReference type="GO" id="GO:0004639">
    <property type="term" value="F:phosphoribosylaminoimidazolesuccinocarboxamide synthase activity"/>
    <property type="evidence" value="ECO:0000318"/>
    <property type="project" value="GO_Central"/>
</dbReference>
<dbReference type="GO" id="GO:0006189">
    <property type="term" value="P:'de novo' IMP biosynthetic process"/>
    <property type="evidence" value="ECO:0000318"/>
    <property type="project" value="GO_Central"/>
</dbReference>
<dbReference type="CDD" id="cd01416">
    <property type="entry name" value="SAICAR_synt_Ade5"/>
    <property type="match status" value="1"/>
</dbReference>
<dbReference type="FunFam" id="3.30.200.20:FF:000183">
    <property type="entry name" value="Probable multifunctional protein ADE2"/>
    <property type="match status" value="1"/>
</dbReference>
<dbReference type="FunFam" id="3.30.470.20:FF:000020">
    <property type="entry name" value="Probable multifunctional protein ADE2"/>
    <property type="match status" value="1"/>
</dbReference>
<dbReference type="FunFam" id="3.40.50.1970:FF:000006">
    <property type="entry name" value="Probable multifunctional protein ADE2"/>
    <property type="match status" value="1"/>
</dbReference>
<dbReference type="Gene3D" id="3.40.50.1970">
    <property type="match status" value="1"/>
</dbReference>
<dbReference type="Gene3D" id="3.30.470.20">
    <property type="entry name" value="ATP-grasp fold, B domain"/>
    <property type="match status" value="1"/>
</dbReference>
<dbReference type="Gene3D" id="3.30.200.20">
    <property type="entry name" value="Phosphorylase Kinase, domain 1"/>
    <property type="match status" value="1"/>
</dbReference>
<dbReference type="HAMAP" id="MF_02045">
    <property type="entry name" value="PurE_classII"/>
    <property type="match status" value="1"/>
</dbReference>
<dbReference type="HAMAP" id="MF_00137">
    <property type="entry name" value="SAICAR_synth"/>
    <property type="match status" value="1"/>
</dbReference>
<dbReference type="InterPro" id="IPR033626">
    <property type="entry name" value="PurE_classII"/>
</dbReference>
<dbReference type="InterPro" id="IPR000031">
    <property type="entry name" value="PurE_dom"/>
</dbReference>
<dbReference type="InterPro" id="IPR028923">
    <property type="entry name" value="SAICAR_synt/ADE2_N"/>
</dbReference>
<dbReference type="InterPro" id="IPR050089">
    <property type="entry name" value="SAICAR_synthetase"/>
</dbReference>
<dbReference type="InterPro" id="IPR018236">
    <property type="entry name" value="SAICAR_synthetase_CS"/>
</dbReference>
<dbReference type="NCBIfam" id="TIGR01162">
    <property type="entry name" value="purE"/>
    <property type="match status" value="1"/>
</dbReference>
<dbReference type="PANTHER" id="PTHR43599">
    <property type="entry name" value="MULTIFUNCTIONAL PROTEIN ADE2"/>
    <property type="match status" value="1"/>
</dbReference>
<dbReference type="PANTHER" id="PTHR43599:SF3">
    <property type="entry name" value="SI:DKEY-6E2.2"/>
    <property type="match status" value="1"/>
</dbReference>
<dbReference type="Pfam" id="PF00731">
    <property type="entry name" value="AIRC"/>
    <property type="match status" value="1"/>
</dbReference>
<dbReference type="Pfam" id="PF01259">
    <property type="entry name" value="SAICAR_synt"/>
    <property type="match status" value="1"/>
</dbReference>
<dbReference type="SMART" id="SM01001">
    <property type="entry name" value="AIRC"/>
    <property type="match status" value="1"/>
</dbReference>
<dbReference type="SUPFAM" id="SSF52255">
    <property type="entry name" value="N5-CAIR mutase (phosphoribosylaminoimidazole carboxylase, PurE)"/>
    <property type="match status" value="1"/>
</dbReference>
<dbReference type="SUPFAM" id="SSF56104">
    <property type="entry name" value="SAICAR synthase-like"/>
    <property type="match status" value="1"/>
</dbReference>
<dbReference type="PROSITE" id="PS01057">
    <property type="entry name" value="SAICAR_SYNTHETASE_1"/>
    <property type="match status" value="1"/>
</dbReference>
<dbReference type="PROSITE" id="PS01058">
    <property type="entry name" value="SAICAR_SYNTHETASE_2"/>
    <property type="match status" value="1"/>
</dbReference>
<sequence length="423" mass="46978">MSSLAEIASRPENLELLAEGKTKQIFDIKGEKDYVLIRSKDSLTAFNAVRKNELEGKSRIASKTTSNVFEYLQLLGLPTHFEKSISETEFVARKCTMIPIEWVARRVATGSFLKRNPGVKEGFRFNDLKLETFFKDDANDDPQWTDEQIVSNGLMIDHLKIGREEISLMKKMTKLVFRALEKGWALSNSALIDMKIEFGVTVEGEILLADVIDNDSWRVWPENDRRLQLDKQVYRDMKEVTEEGLALVLKNYTKVMDITATFSKHQQKCHVLVIMGSGSDGVFARKISDEAKKFGLETTLKVSSAHKTTSDTLEVIADFEESGVPTVVIAVAGRSNGLGPVIAGNSSLPVINCPPPSESTSLDIWSSLRMPNGIGCTTVLDPSEAALAAAKILASHNHIVFGKVLTAQLKNQINIYNANRKLE</sequence>
<reference key="1">
    <citation type="journal article" date="1998" name="Science">
        <title>Genome sequence of the nematode C. elegans: a platform for investigating biology.</title>
        <authorList>
            <consortium name="The C. elegans sequencing consortium"/>
        </authorList>
    </citation>
    <scope>NUCLEOTIDE SEQUENCE [LARGE SCALE GENOMIC DNA]</scope>
    <source>
        <strain>Bristol N2</strain>
    </source>
</reference>
<name>PUR6_CAEEL</name>